<sequence length="261" mass="28231">MKILLTNDDGLYSAGLKAAYDALSELGEVFVVAPAVQRSGVGRSLSIMEPIRVSEVKVNGMRVFAVDGTPTDSVIIGMYEVIGEIPDLAVSGINLGENLSTEAATTSGTVGAALEAATHGSKTIAISLQMPDVSKFELTSKADFSFASKVLRGIAEIVLYKGLPEGVDLLNVNVPAKPNGKIAVTRLARRMYRVSVEKRLDPRGREYYWIYGEETEDAEEGTDIHALRQGYVSITPLKIDLTASVEFDIVEGWFDGLEWEV</sequence>
<reference key="1">
    <citation type="journal article" date="1997" name="Nature">
        <title>The complete genome sequence of the hyperthermophilic, sulphate-reducing archaeon Archaeoglobus fulgidus.</title>
        <authorList>
            <person name="Klenk H.-P."/>
            <person name="Clayton R.A."/>
            <person name="Tomb J.-F."/>
            <person name="White O."/>
            <person name="Nelson K.E."/>
            <person name="Ketchum K.A."/>
            <person name="Dodson R.J."/>
            <person name="Gwinn M.L."/>
            <person name="Hickey E.K."/>
            <person name="Peterson J.D."/>
            <person name="Richardson D.L."/>
            <person name="Kerlavage A.R."/>
            <person name="Graham D.E."/>
            <person name="Kyrpides N.C."/>
            <person name="Fleischmann R.D."/>
            <person name="Quackenbush J."/>
            <person name="Lee N.H."/>
            <person name="Sutton G.G."/>
            <person name="Gill S.R."/>
            <person name="Kirkness E.F."/>
            <person name="Dougherty B.A."/>
            <person name="McKenney K."/>
            <person name="Adams M.D."/>
            <person name="Loftus B.J."/>
            <person name="Peterson S.N."/>
            <person name="Reich C.I."/>
            <person name="McNeil L.K."/>
            <person name="Badger J.H."/>
            <person name="Glodek A."/>
            <person name="Zhou L."/>
            <person name="Overbeek R."/>
            <person name="Gocayne J.D."/>
            <person name="Weidman J.F."/>
            <person name="McDonald L.A."/>
            <person name="Utterback T.R."/>
            <person name="Cotton M.D."/>
            <person name="Spriggs T."/>
            <person name="Artiach P."/>
            <person name="Kaine B.P."/>
            <person name="Sykes S.M."/>
            <person name="Sadow P.W."/>
            <person name="D'Andrea K.P."/>
            <person name="Bowman C."/>
            <person name="Fujii C."/>
            <person name="Garland S.A."/>
            <person name="Mason T.M."/>
            <person name="Olsen G.J."/>
            <person name="Fraser C.M."/>
            <person name="Smith H.O."/>
            <person name="Woese C.R."/>
            <person name="Venter J.C."/>
        </authorList>
    </citation>
    <scope>NUCLEOTIDE SEQUENCE [LARGE SCALE GENOMIC DNA]</scope>
    <source>
        <strain>ATCC 49558 / DSM 4304 / JCM 9628 / NBRC 100126 / VC-16</strain>
    </source>
</reference>
<name>SURE_ARCFU</name>
<feature type="chain" id="PRO_0000111861" description="5'-nucleotidase SurE">
    <location>
        <begin position="1"/>
        <end position="261"/>
    </location>
</feature>
<feature type="binding site" evidence="1">
    <location>
        <position position="8"/>
    </location>
    <ligand>
        <name>a divalent metal cation</name>
        <dbReference type="ChEBI" id="CHEBI:60240"/>
    </ligand>
</feature>
<feature type="binding site" evidence="1">
    <location>
        <position position="9"/>
    </location>
    <ligand>
        <name>a divalent metal cation</name>
        <dbReference type="ChEBI" id="CHEBI:60240"/>
    </ligand>
</feature>
<feature type="binding site" evidence="1">
    <location>
        <position position="39"/>
    </location>
    <ligand>
        <name>a divalent metal cation</name>
        <dbReference type="ChEBI" id="CHEBI:60240"/>
    </ligand>
</feature>
<feature type="binding site" evidence="1">
    <location>
        <position position="94"/>
    </location>
    <ligand>
        <name>a divalent metal cation</name>
        <dbReference type="ChEBI" id="CHEBI:60240"/>
    </ligand>
</feature>
<proteinExistence type="inferred from homology"/>
<protein>
    <recommendedName>
        <fullName evidence="1">5'-nucleotidase SurE</fullName>
        <ecNumber evidence="1">3.1.3.5</ecNumber>
    </recommendedName>
    <alternativeName>
        <fullName evidence="1">Nucleoside 5'-monophosphate phosphohydrolase</fullName>
    </alternativeName>
</protein>
<organism>
    <name type="scientific">Archaeoglobus fulgidus (strain ATCC 49558 / DSM 4304 / JCM 9628 / NBRC 100126 / VC-16)</name>
    <dbReference type="NCBI Taxonomy" id="224325"/>
    <lineage>
        <taxon>Archaea</taxon>
        <taxon>Methanobacteriati</taxon>
        <taxon>Methanobacteriota</taxon>
        <taxon>Archaeoglobi</taxon>
        <taxon>Archaeoglobales</taxon>
        <taxon>Archaeoglobaceae</taxon>
        <taxon>Archaeoglobus</taxon>
    </lineage>
</organism>
<keyword id="KW-0963">Cytoplasm</keyword>
<keyword id="KW-0378">Hydrolase</keyword>
<keyword id="KW-0479">Metal-binding</keyword>
<keyword id="KW-0547">Nucleotide-binding</keyword>
<keyword id="KW-1185">Reference proteome</keyword>
<accession>O29320</accession>
<dbReference type="EC" id="3.1.3.5" evidence="1"/>
<dbReference type="EMBL" id="AE000782">
    <property type="protein sequence ID" value="AAB90298.1"/>
    <property type="molecule type" value="Genomic_DNA"/>
</dbReference>
<dbReference type="PIR" id="F69367">
    <property type="entry name" value="F69367"/>
</dbReference>
<dbReference type="RefSeq" id="WP_010878442.1">
    <property type="nucleotide sequence ID" value="NC_000917.1"/>
</dbReference>
<dbReference type="SMR" id="O29320"/>
<dbReference type="STRING" id="224325.AF_0942"/>
<dbReference type="PaxDb" id="224325-AF_0942"/>
<dbReference type="EnsemblBacteria" id="AAB90298">
    <property type="protein sequence ID" value="AAB90298"/>
    <property type="gene ID" value="AF_0942"/>
</dbReference>
<dbReference type="GeneID" id="1484165"/>
<dbReference type="KEGG" id="afu:AF_0942"/>
<dbReference type="eggNOG" id="arCOG02303">
    <property type="taxonomic scope" value="Archaea"/>
</dbReference>
<dbReference type="HOGENOM" id="CLU_045192_1_3_2"/>
<dbReference type="OrthoDB" id="26873at2157"/>
<dbReference type="PhylomeDB" id="O29320"/>
<dbReference type="Proteomes" id="UP000002199">
    <property type="component" value="Chromosome"/>
</dbReference>
<dbReference type="GO" id="GO:0005737">
    <property type="term" value="C:cytoplasm"/>
    <property type="evidence" value="ECO:0007669"/>
    <property type="project" value="UniProtKB-SubCell"/>
</dbReference>
<dbReference type="GO" id="GO:0008253">
    <property type="term" value="F:5'-nucleotidase activity"/>
    <property type="evidence" value="ECO:0007669"/>
    <property type="project" value="UniProtKB-UniRule"/>
</dbReference>
<dbReference type="GO" id="GO:0046872">
    <property type="term" value="F:metal ion binding"/>
    <property type="evidence" value="ECO:0007669"/>
    <property type="project" value="UniProtKB-UniRule"/>
</dbReference>
<dbReference type="GO" id="GO:0000166">
    <property type="term" value="F:nucleotide binding"/>
    <property type="evidence" value="ECO:0007669"/>
    <property type="project" value="UniProtKB-KW"/>
</dbReference>
<dbReference type="Gene3D" id="3.40.1210.10">
    <property type="entry name" value="Survival protein SurE-like phosphatase/nucleotidase"/>
    <property type="match status" value="1"/>
</dbReference>
<dbReference type="HAMAP" id="MF_00060">
    <property type="entry name" value="SurE"/>
    <property type="match status" value="1"/>
</dbReference>
<dbReference type="InterPro" id="IPR030048">
    <property type="entry name" value="SurE"/>
</dbReference>
<dbReference type="InterPro" id="IPR002828">
    <property type="entry name" value="SurE-like_Pase/nucleotidase"/>
</dbReference>
<dbReference type="InterPro" id="IPR036523">
    <property type="entry name" value="SurE-like_sf"/>
</dbReference>
<dbReference type="NCBIfam" id="NF001490">
    <property type="entry name" value="PRK00346.1-4"/>
    <property type="match status" value="1"/>
</dbReference>
<dbReference type="NCBIfam" id="NF001491">
    <property type="entry name" value="PRK00346.2-1"/>
    <property type="match status" value="1"/>
</dbReference>
<dbReference type="NCBIfam" id="TIGR00087">
    <property type="entry name" value="surE"/>
    <property type="match status" value="1"/>
</dbReference>
<dbReference type="PANTHER" id="PTHR30457">
    <property type="entry name" value="5'-NUCLEOTIDASE SURE"/>
    <property type="match status" value="1"/>
</dbReference>
<dbReference type="PANTHER" id="PTHR30457:SF0">
    <property type="entry name" value="PHOSPHATASE, PUTATIVE (AFU_ORTHOLOGUE AFUA_4G01070)-RELATED"/>
    <property type="match status" value="1"/>
</dbReference>
<dbReference type="Pfam" id="PF01975">
    <property type="entry name" value="SurE"/>
    <property type="match status" value="1"/>
</dbReference>
<dbReference type="SUPFAM" id="SSF64167">
    <property type="entry name" value="SurE-like"/>
    <property type="match status" value="1"/>
</dbReference>
<evidence type="ECO:0000255" key="1">
    <source>
        <dbReference type="HAMAP-Rule" id="MF_00060"/>
    </source>
</evidence>
<gene>
    <name evidence="1" type="primary">surE</name>
    <name type="ordered locus">AF_0942</name>
</gene>
<comment type="function">
    <text evidence="1">Nucleotidase that shows phosphatase activity on nucleoside 5'-monophosphates.</text>
</comment>
<comment type="catalytic activity">
    <reaction evidence="1">
        <text>a ribonucleoside 5'-phosphate + H2O = a ribonucleoside + phosphate</text>
        <dbReference type="Rhea" id="RHEA:12484"/>
        <dbReference type="ChEBI" id="CHEBI:15377"/>
        <dbReference type="ChEBI" id="CHEBI:18254"/>
        <dbReference type="ChEBI" id="CHEBI:43474"/>
        <dbReference type="ChEBI" id="CHEBI:58043"/>
        <dbReference type="EC" id="3.1.3.5"/>
    </reaction>
</comment>
<comment type="cofactor">
    <cofactor evidence="1">
        <name>a divalent metal cation</name>
        <dbReference type="ChEBI" id="CHEBI:60240"/>
    </cofactor>
    <text evidence="1">Binds 1 divalent metal cation per subunit.</text>
</comment>
<comment type="subcellular location">
    <subcellularLocation>
        <location evidence="1">Cytoplasm</location>
    </subcellularLocation>
</comment>
<comment type="similarity">
    <text evidence="1">Belongs to the SurE nucleotidase family.</text>
</comment>